<organism>
    <name type="scientific">Burkholderia orbicola (strain MC0-3)</name>
    <dbReference type="NCBI Taxonomy" id="406425"/>
    <lineage>
        <taxon>Bacteria</taxon>
        <taxon>Pseudomonadati</taxon>
        <taxon>Pseudomonadota</taxon>
        <taxon>Betaproteobacteria</taxon>
        <taxon>Burkholderiales</taxon>
        <taxon>Burkholderiaceae</taxon>
        <taxon>Burkholderia</taxon>
        <taxon>Burkholderia cepacia complex</taxon>
        <taxon>Burkholderia orbicola</taxon>
    </lineage>
</organism>
<accession>B1JVQ4</accession>
<proteinExistence type="inferred from homology"/>
<comment type="function">
    <text evidence="1">Involved in the biosynthesis of branched-chain amino acids (BCAA). Catalyzes an alkyl-migration followed by a ketol-acid reduction of (S)-2-acetolactate (S2AL) to yield (R)-2,3-dihydroxy-isovalerate. In the isomerase reaction, S2AL is rearranged via a Mg-dependent methyl migration to produce 3-hydroxy-3-methyl-2-ketobutyrate (HMKB). In the reductase reaction, this 2-ketoacid undergoes a metal-dependent reduction by NADPH to yield (R)-2,3-dihydroxy-isovalerate.</text>
</comment>
<comment type="catalytic activity">
    <reaction evidence="1">
        <text>(2R)-2,3-dihydroxy-3-methylbutanoate + NADP(+) = (2S)-2-acetolactate + NADPH + H(+)</text>
        <dbReference type="Rhea" id="RHEA:22068"/>
        <dbReference type="ChEBI" id="CHEBI:15378"/>
        <dbReference type="ChEBI" id="CHEBI:49072"/>
        <dbReference type="ChEBI" id="CHEBI:57783"/>
        <dbReference type="ChEBI" id="CHEBI:58349"/>
        <dbReference type="ChEBI" id="CHEBI:58476"/>
        <dbReference type="EC" id="1.1.1.86"/>
    </reaction>
</comment>
<comment type="catalytic activity">
    <reaction evidence="1">
        <text>(2R,3R)-2,3-dihydroxy-3-methylpentanoate + NADP(+) = (S)-2-ethyl-2-hydroxy-3-oxobutanoate + NADPH + H(+)</text>
        <dbReference type="Rhea" id="RHEA:13493"/>
        <dbReference type="ChEBI" id="CHEBI:15378"/>
        <dbReference type="ChEBI" id="CHEBI:49256"/>
        <dbReference type="ChEBI" id="CHEBI:49258"/>
        <dbReference type="ChEBI" id="CHEBI:57783"/>
        <dbReference type="ChEBI" id="CHEBI:58349"/>
        <dbReference type="EC" id="1.1.1.86"/>
    </reaction>
</comment>
<comment type="cofactor">
    <cofactor evidence="1">
        <name>Mg(2+)</name>
        <dbReference type="ChEBI" id="CHEBI:18420"/>
    </cofactor>
    <text evidence="1">Binds 2 magnesium ions per subunit.</text>
</comment>
<comment type="pathway">
    <text evidence="1">Amino-acid biosynthesis; L-isoleucine biosynthesis; L-isoleucine from 2-oxobutanoate: step 2/4.</text>
</comment>
<comment type="pathway">
    <text evidence="1">Amino-acid biosynthesis; L-valine biosynthesis; L-valine from pyruvate: step 2/4.</text>
</comment>
<comment type="similarity">
    <text evidence="1">Belongs to the ketol-acid reductoisomerase family.</text>
</comment>
<protein>
    <recommendedName>
        <fullName evidence="1">Ketol-acid reductoisomerase (NADP(+))</fullName>
        <shortName evidence="1">KARI</shortName>
        <ecNumber evidence="1">1.1.1.86</ecNumber>
    </recommendedName>
    <alternativeName>
        <fullName evidence="1">Acetohydroxy-acid isomeroreductase</fullName>
        <shortName evidence="1">AHIR</shortName>
    </alternativeName>
    <alternativeName>
        <fullName evidence="1">Alpha-keto-beta-hydroxylacyl reductoisomerase</fullName>
    </alternativeName>
    <alternativeName>
        <fullName evidence="1">Ketol-acid reductoisomerase type 1</fullName>
    </alternativeName>
    <alternativeName>
        <fullName evidence="1">Ketol-acid reductoisomerase type I</fullName>
    </alternativeName>
</protein>
<feature type="chain" id="PRO_1000190920" description="Ketol-acid reductoisomerase (NADP(+))">
    <location>
        <begin position="1"/>
        <end position="338"/>
    </location>
</feature>
<feature type="domain" description="KARI N-terminal Rossmann" evidence="2">
    <location>
        <begin position="1"/>
        <end position="181"/>
    </location>
</feature>
<feature type="domain" description="KARI C-terminal knotted" evidence="3">
    <location>
        <begin position="182"/>
        <end position="327"/>
    </location>
</feature>
<feature type="active site" evidence="1">
    <location>
        <position position="107"/>
    </location>
</feature>
<feature type="binding site" evidence="1">
    <location>
        <begin position="24"/>
        <end position="27"/>
    </location>
    <ligand>
        <name>NADP(+)</name>
        <dbReference type="ChEBI" id="CHEBI:58349"/>
    </ligand>
</feature>
<feature type="binding site" evidence="1">
    <location>
        <position position="47"/>
    </location>
    <ligand>
        <name>NADP(+)</name>
        <dbReference type="ChEBI" id="CHEBI:58349"/>
    </ligand>
</feature>
<feature type="binding site" evidence="1">
    <location>
        <position position="52"/>
    </location>
    <ligand>
        <name>NADP(+)</name>
        <dbReference type="ChEBI" id="CHEBI:58349"/>
    </ligand>
</feature>
<feature type="binding site" evidence="1">
    <location>
        <position position="133"/>
    </location>
    <ligand>
        <name>NADP(+)</name>
        <dbReference type="ChEBI" id="CHEBI:58349"/>
    </ligand>
</feature>
<feature type="binding site" evidence="1">
    <location>
        <position position="190"/>
    </location>
    <ligand>
        <name>Mg(2+)</name>
        <dbReference type="ChEBI" id="CHEBI:18420"/>
        <label>1</label>
    </ligand>
</feature>
<feature type="binding site" evidence="1">
    <location>
        <position position="190"/>
    </location>
    <ligand>
        <name>Mg(2+)</name>
        <dbReference type="ChEBI" id="CHEBI:18420"/>
        <label>2</label>
    </ligand>
</feature>
<feature type="binding site" evidence="1">
    <location>
        <position position="194"/>
    </location>
    <ligand>
        <name>Mg(2+)</name>
        <dbReference type="ChEBI" id="CHEBI:18420"/>
        <label>1</label>
    </ligand>
</feature>
<feature type="binding site" evidence="1">
    <location>
        <position position="226"/>
    </location>
    <ligand>
        <name>Mg(2+)</name>
        <dbReference type="ChEBI" id="CHEBI:18420"/>
        <label>2</label>
    </ligand>
</feature>
<feature type="binding site" evidence="1">
    <location>
        <position position="230"/>
    </location>
    <ligand>
        <name>Mg(2+)</name>
        <dbReference type="ChEBI" id="CHEBI:18420"/>
        <label>2</label>
    </ligand>
</feature>
<feature type="binding site" evidence="1">
    <location>
        <position position="251"/>
    </location>
    <ligand>
        <name>substrate</name>
    </ligand>
</feature>
<dbReference type="EC" id="1.1.1.86" evidence="1"/>
<dbReference type="EMBL" id="CP000958">
    <property type="protein sequence ID" value="ACA91447.1"/>
    <property type="molecule type" value="Genomic_DNA"/>
</dbReference>
<dbReference type="RefSeq" id="WP_006478252.1">
    <property type="nucleotide sequence ID" value="NC_010508.1"/>
</dbReference>
<dbReference type="SMR" id="B1JVQ4"/>
<dbReference type="GeneID" id="83049075"/>
<dbReference type="KEGG" id="bcm:Bcenmc03_2286"/>
<dbReference type="HOGENOM" id="CLU_033821_0_1_4"/>
<dbReference type="UniPathway" id="UPA00047">
    <property type="reaction ID" value="UER00056"/>
</dbReference>
<dbReference type="UniPathway" id="UPA00049">
    <property type="reaction ID" value="UER00060"/>
</dbReference>
<dbReference type="Proteomes" id="UP000002169">
    <property type="component" value="Chromosome 1"/>
</dbReference>
<dbReference type="GO" id="GO:0005829">
    <property type="term" value="C:cytosol"/>
    <property type="evidence" value="ECO:0007669"/>
    <property type="project" value="TreeGrafter"/>
</dbReference>
<dbReference type="GO" id="GO:0004455">
    <property type="term" value="F:ketol-acid reductoisomerase activity"/>
    <property type="evidence" value="ECO:0007669"/>
    <property type="project" value="UniProtKB-UniRule"/>
</dbReference>
<dbReference type="GO" id="GO:0000287">
    <property type="term" value="F:magnesium ion binding"/>
    <property type="evidence" value="ECO:0007669"/>
    <property type="project" value="UniProtKB-UniRule"/>
</dbReference>
<dbReference type="GO" id="GO:0050661">
    <property type="term" value="F:NADP binding"/>
    <property type="evidence" value="ECO:0007669"/>
    <property type="project" value="InterPro"/>
</dbReference>
<dbReference type="GO" id="GO:0009097">
    <property type="term" value="P:isoleucine biosynthetic process"/>
    <property type="evidence" value="ECO:0007669"/>
    <property type="project" value="UniProtKB-UniRule"/>
</dbReference>
<dbReference type="GO" id="GO:0009099">
    <property type="term" value="P:L-valine biosynthetic process"/>
    <property type="evidence" value="ECO:0007669"/>
    <property type="project" value="UniProtKB-UniRule"/>
</dbReference>
<dbReference type="FunFam" id="3.40.50.720:FF:000023">
    <property type="entry name" value="Ketol-acid reductoisomerase (NADP(+))"/>
    <property type="match status" value="1"/>
</dbReference>
<dbReference type="Gene3D" id="6.10.240.10">
    <property type="match status" value="1"/>
</dbReference>
<dbReference type="Gene3D" id="3.40.50.720">
    <property type="entry name" value="NAD(P)-binding Rossmann-like Domain"/>
    <property type="match status" value="1"/>
</dbReference>
<dbReference type="HAMAP" id="MF_00435">
    <property type="entry name" value="IlvC"/>
    <property type="match status" value="1"/>
</dbReference>
<dbReference type="InterPro" id="IPR008927">
    <property type="entry name" value="6-PGluconate_DH-like_C_sf"/>
</dbReference>
<dbReference type="InterPro" id="IPR013023">
    <property type="entry name" value="KARI"/>
</dbReference>
<dbReference type="InterPro" id="IPR000506">
    <property type="entry name" value="KARI_C"/>
</dbReference>
<dbReference type="InterPro" id="IPR013116">
    <property type="entry name" value="KARI_N"/>
</dbReference>
<dbReference type="InterPro" id="IPR014359">
    <property type="entry name" value="KARI_prok"/>
</dbReference>
<dbReference type="InterPro" id="IPR036291">
    <property type="entry name" value="NAD(P)-bd_dom_sf"/>
</dbReference>
<dbReference type="NCBIfam" id="TIGR00465">
    <property type="entry name" value="ilvC"/>
    <property type="match status" value="1"/>
</dbReference>
<dbReference type="NCBIfam" id="NF004017">
    <property type="entry name" value="PRK05479.1"/>
    <property type="match status" value="1"/>
</dbReference>
<dbReference type="NCBIfam" id="NF009940">
    <property type="entry name" value="PRK13403.1"/>
    <property type="match status" value="1"/>
</dbReference>
<dbReference type="PANTHER" id="PTHR21371">
    <property type="entry name" value="KETOL-ACID REDUCTOISOMERASE, MITOCHONDRIAL"/>
    <property type="match status" value="1"/>
</dbReference>
<dbReference type="PANTHER" id="PTHR21371:SF1">
    <property type="entry name" value="KETOL-ACID REDUCTOISOMERASE, MITOCHONDRIAL"/>
    <property type="match status" value="1"/>
</dbReference>
<dbReference type="Pfam" id="PF01450">
    <property type="entry name" value="KARI_C"/>
    <property type="match status" value="1"/>
</dbReference>
<dbReference type="Pfam" id="PF07991">
    <property type="entry name" value="KARI_N"/>
    <property type="match status" value="1"/>
</dbReference>
<dbReference type="PIRSF" id="PIRSF000116">
    <property type="entry name" value="IlvC_gammaproteo"/>
    <property type="match status" value="1"/>
</dbReference>
<dbReference type="SUPFAM" id="SSF48179">
    <property type="entry name" value="6-phosphogluconate dehydrogenase C-terminal domain-like"/>
    <property type="match status" value="1"/>
</dbReference>
<dbReference type="SUPFAM" id="SSF51735">
    <property type="entry name" value="NAD(P)-binding Rossmann-fold domains"/>
    <property type="match status" value="1"/>
</dbReference>
<dbReference type="PROSITE" id="PS51851">
    <property type="entry name" value="KARI_C"/>
    <property type="match status" value="1"/>
</dbReference>
<dbReference type="PROSITE" id="PS51850">
    <property type="entry name" value="KARI_N"/>
    <property type="match status" value="1"/>
</dbReference>
<reference key="1">
    <citation type="submission" date="2008-02" db="EMBL/GenBank/DDBJ databases">
        <title>Complete sequence of chromosome 1 of Burkholderia cenocepacia MC0-3.</title>
        <authorList>
            <person name="Copeland A."/>
            <person name="Lucas S."/>
            <person name="Lapidus A."/>
            <person name="Barry K."/>
            <person name="Bruce D."/>
            <person name="Goodwin L."/>
            <person name="Glavina del Rio T."/>
            <person name="Dalin E."/>
            <person name="Tice H."/>
            <person name="Pitluck S."/>
            <person name="Chain P."/>
            <person name="Malfatti S."/>
            <person name="Shin M."/>
            <person name="Vergez L."/>
            <person name="Schmutz J."/>
            <person name="Larimer F."/>
            <person name="Land M."/>
            <person name="Hauser L."/>
            <person name="Kyrpides N."/>
            <person name="Mikhailova N."/>
            <person name="Tiedje J."/>
            <person name="Richardson P."/>
        </authorList>
    </citation>
    <scope>NUCLEOTIDE SEQUENCE [LARGE SCALE GENOMIC DNA]</scope>
    <source>
        <strain>MC0-3</strain>
    </source>
</reference>
<gene>
    <name evidence="1" type="primary">ilvC</name>
    <name type="ordered locus">Bcenmc03_2286</name>
</gene>
<name>ILVC_BURO0</name>
<sequence length="338" mass="36311">MNVFYDKDADLSLIKGKQVTIIGYGSQGHAHALNLKDSGVNVTVGLRKGGASWSKAENAGLSVKEVAEAVKGADVVMMLLPDEQIADVYAKEVHANIKQGAALAFAHGFNVHYGQVIPRADLDVIMIAPKAPGHTVRGTYSQGGGVPHLIAVAQNKSGAARDIALSYAAANGGGRAGIIETNFREETETDLFGEQAVLCGGTVELIKAGFETLVEAGYAPEMAYFECLHELKLIVDLIYEGGIANMNYSISNNAEYGEYVTGPRVVTEETKKAMKQCLTDIQTGEYAKSFILENKAGAPTLQSRRRLTAEHQIEQVGAKLRAMMPWIAKNKLVDQTKN</sequence>
<keyword id="KW-0028">Amino-acid biosynthesis</keyword>
<keyword id="KW-0100">Branched-chain amino acid biosynthesis</keyword>
<keyword id="KW-0460">Magnesium</keyword>
<keyword id="KW-0479">Metal-binding</keyword>
<keyword id="KW-0521">NADP</keyword>
<keyword id="KW-0560">Oxidoreductase</keyword>
<evidence type="ECO:0000255" key="1">
    <source>
        <dbReference type="HAMAP-Rule" id="MF_00435"/>
    </source>
</evidence>
<evidence type="ECO:0000255" key="2">
    <source>
        <dbReference type="PROSITE-ProRule" id="PRU01197"/>
    </source>
</evidence>
<evidence type="ECO:0000255" key="3">
    <source>
        <dbReference type="PROSITE-ProRule" id="PRU01198"/>
    </source>
</evidence>